<protein>
    <recommendedName>
        <fullName evidence="19">Calcitonin receptor</fullName>
        <shortName>CT-R</shortName>
    </recommendedName>
</protein>
<comment type="function">
    <text evidence="9 10 11">G protein-coupled receptor activated by ligand peptides amylin (IAPP), calcitonin (CT/CALCA) and calcitonin gene-related peptide type 1 (CGRP1/CALCA) (PubMed:35324283, PubMed:38603770). CALCR interacts with receptor-activity-modifying proteins RAMP1, 2 and 3 to form receptor complexes AMYR1, 2 and 3, respectively (PubMed:35324283, PubMed:38603770). IAPP, CT and CGRP1 activate CALCR and AMYRs with distinct modes of receptor activation resulting in specific phenotypes (PubMed:35324283, PubMed:38603770). Ligand binding causes a conformation change that triggers signaling via guanine nucleotide-binding proteins (G proteins) and modulates the activity of downstream effectors. Activates cAMP-dependent pathway (PubMed:35324283, PubMed:7476993).</text>
</comment>
<comment type="function">
    <molecule>Isoform 2</molecule>
    <text evidence="11">Non-functional protein. Unable to couple to G proteins and activate adenylyl cyclase (PubMed:7476993). Does not undergo receptor internalization following ligand binding (PubMed:7476993).</text>
</comment>
<comment type="activity regulation">
    <text>Sensitive to cholera toxin.</text>
</comment>
<comment type="subunit">
    <text evidence="5 9 10">Heterodimer of CALCR and RAMP1, RAMP2 or RAMP3; the receptor complexes function as AMYR1, AMYR2 and AMYR3 receptors, respectively, and respond to amylin/IAPP, calcitonin/CT and CGRP1 ligands (PubMed:35324283, PubMed:38603770). Interacts with GPRASP2 (PubMed:15086532).</text>
</comment>
<comment type="subcellular location">
    <subcellularLocation>
        <location evidence="9">Cell membrane</location>
        <topology evidence="9">Multi-pass membrane protein</topology>
    </subcellularLocation>
</comment>
<comment type="alternative products">
    <event type="alternative promoter"/>
    <event type="alternative splicing"/>
    <isoform>
        <id>P30988-2</id>
        <name>1</name>
        <sequence type="displayed"/>
    </isoform>
    <isoform>
        <id>P30988-1</id>
        <name>2</name>
        <sequence type="described" ref="VSP_060211"/>
    </isoform>
    <isoform>
        <id>P30988-3</id>
        <name>3</name>
        <sequence type="described" ref="VSP_060209"/>
    </isoform>
    <isoform>
        <id>P30988-4</id>
        <name>4</name>
        <name>Delta(1-47)hCT((a))</name>
        <sequence type="described" ref="VSP_060209 VSP_060211"/>
    </isoform>
    <isoform>
        <id>P30988-5</id>
        <name>5</name>
        <name>HCTR-5</name>
        <sequence type="described" ref="VSP_060212 VSP_060213"/>
    </isoform>
    <isoform>
        <id>P30988-6</id>
        <name>6</name>
        <name>HCTR-6</name>
        <sequence type="described" ref="VSP_060211 VSP_060212 VSP_060213"/>
    </isoform>
</comment>
<comment type="polymorphism">
    <text>Genetic variations in CALCR may be correlated with bone mineral density (BMD). Low BMD is a risk factor for osteoporotic fracture. Osteoporosis is characterized by reduced bone mineral density, disruption of bone microarchitecture, and the alteration of the amount and variety of non-collagenous proteins in bone. Osteoporotic bones are more at risk of fracture.</text>
</comment>
<comment type="similarity">
    <text evidence="19">Belongs to the G-protein coupled receptor 2 family.</text>
</comment>
<name>CALCR_HUMAN</name>
<gene>
    <name evidence="20" type="primary">CALCR</name>
</gene>
<reference key="1">
    <citation type="journal article" date="1992" name="J. Clin. Invest.">
        <title>Cloning, characterization, and expression of a human calcitonin receptor from an ovarian carcinoma cell line.</title>
        <authorList>
            <person name="Gorn A.H."/>
            <person name="Lin H.Y."/>
            <person name="Yamin M."/>
            <person name="Auron P.E."/>
            <person name="Flannery M.R."/>
            <person name="Tapp D.R."/>
            <person name="Manning C.A."/>
            <person name="Lodish H.F."/>
            <person name="Krane S.M."/>
            <person name="Goldring S.R."/>
        </authorList>
    </citation>
    <scope>NUCLEOTIDE SEQUENCE [MRNA] (ISOFORM 2)</scope>
    <scope>VARIANT PRO-447</scope>
    <source>
        <tissue>Ovarian carcinoma</tissue>
    </source>
</reference>
<reference key="2">
    <citation type="journal article" date="1994" name="Mol. Pharmacol.">
        <title>Cloning and characterization of an abundant subtype of the human calcitonin receptor.</title>
        <authorList>
            <person name="Kuestner R.E."/>
            <person name="Elrod R.D."/>
            <person name="Grant F.J."/>
            <person name="Hagen F.S."/>
            <person name="Kuijper J.L."/>
            <person name="Mathewes S.L."/>
            <person name="O'Hara P.J."/>
            <person name="Sheppard P.O."/>
            <person name="Stroop S.D."/>
            <person name="Thompson D.L."/>
            <person name="Whitmore T.E."/>
            <person name="Findlays D.M."/>
            <person name="Houssamis S."/>
            <person name="Sexton P.M."/>
            <person name="Moore E.E."/>
        </authorList>
    </citation>
    <scope>NUCLEOTIDE SEQUENCE [MRNA] (ISOFORM 1)</scope>
</reference>
<reference key="3">
    <citation type="journal article" date="1995" name="Endocrinology">
        <title>Molecular cloning and functional expression of a third isoform of the human calcitonin receptor and partial characterization of the calcitonin receptor gene.</title>
        <authorList>
            <person name="Albrandt K."/>
            <person name="Brady E.M.G."/>
            <person name="Moore C.X."/>
            <person name="Mull E."/>
            <person name="Sierzega M.E."/>
            <person name="Beaumont K."/>
        </authorList>
    </citation>
    <scope>NUCLEOTIDE SEQUENCE [MRNA] (ISOFORMS 1 AND 3)</scope>
    <scope>ALTERNATIVE SPLICING</scope>
    <scope>VARIANT PRO-447</scope>
    <source>
        <tissue>Mammary carcinoma</tissue>
    </source>
</reference>
<reference key="4">
    <citation type="journal article" date="1994" name="FEBS Lett.">
        <title>An isoform of the human calcitonin receptor is expressed in TT cells and in medullary carcinoma of the thyroid.</title>
        <authorList>
            <person name="Frendo J.L."/>
            <person name="Pichaud F."/>
            <person name="Delage-Mourroux R."/>
            <person name="Bouizar Z."/>
            <person name="Segond N."/>
            <person name="Moukhtar M.S."/>
            <person name="Jullienne A."/>
        </authorList>
    </citation>
    <scope>NUCLEOTIDE SEQUENCE [MRNA] (ISOFORM 1)</scope>
</reference>
<reference key="5">
    <citation type="journal article" date="1999" name="FEBS Lett.">
        <title>A novel calcitonin receptor gene in human osteoclasts from normal bone marrow.</title>
        <authorList>
            <person name="Nishikawa T."/>
            <person name="Ishikawa H."/>
            <person name="Yamamoto S."/>
            <person name="Koshihara Y."/>
        </authorList>
    </citation>
    <scope>NUCLEOTIDE SEQUENCE [MRNA] (ISOFORM 1)</scope>
    <scope>VARIANT PRO-447</scope>
    <source>
        <tissue>Mammary carcinoma</tissue>
    </source>
</reference>
<reference key="6">
    <citation type="journal article" date="2004" name="Gene">
        <title>Molecular characterization of two novel isoforms of the human calcitonin receptor.</title>
        <authorList>
            <person name="Beaudreuil J."/>
            <person name="Balasubramanian S."/>
            <person name="Chenais J."/>
            <person name="Taboulet J."/>
            <person name="Frenkian M."/>
            <person name="Orcel P."/>
            <person name="Jullienne A."/>
            <person name="Horne W."/>
            <person name="de Vernejoul M.C."/>
            <person name="Cressent M."/>
        </authorList>
    </citation>
    <scope>NUCLEOTIDE SEQUENCE [MRNA] (ISOFORMS 5 AND 6)</scope>
    <scope>VARIANT PRO-447</scope>
</reference>
<reference key="7">
    <citation type="submission" date="2010-06" db="EMBL/GenBank/DDBJ databases">
        <title>Identification of the human calcitonin receptor expressed in osteoarthritis chondrocytes.</title>
        <authorList>
            <person name="Bonnefond C."/>
        </authorList>
    </citation>
    <scope>NUCLEOTIDE SEQUENCE [MRNA] (ISOFORM 1)</scope>
    <source>
        <tissue>Cartilage</tissue>
    </source>
</reference>
<reference key="8">
    <citation type="submission" date="2003-10" db="EMBL/GenBank/DDBJ databases">
        <title>cDNA clones of human proteins involved in signal transduction sequenced by the Guthrie cDNA resource center (www.cdna.org).</title>
        <authorList>
            <person name="King M.M."/>
            <person name="Aronstam R.S."/>
            <person name="Sharma S.V."/>
        </authorList>
    </citation>
    <scope>NUCLEOTIDE SEQUENCE [LARGE SCALE MRNA] (ISOFORM 1)</scope>
    <source>
        <tissue>Kidney</tissue>
    </source>
</reference>
<reference key="9">
    <citation type="journal article" date="2004" name="Nat. Genet.">
        <title>Complete sequencing and characterization of 21,243 full-length human cDNAs.</title>
        <authorList>
            <person name="Ota T."/>
            <person name="Suzuki Y."/>
            <person name="Nishikawa T."/>
            <person name="Otsuki T."/>
            <person name="Sugiyama T."/>
            <person name="Irie R."/>
            <person name="Wakamatsu A."/>
            <person name="Hayashi K."/>
            <person name="Sato H."/>
            <person name="Nagai K."/>
            <person name="Kimura K."/>
            <person name="Makita H."/>
            <person name="Sekine M."/>
            <person name="Obayashi M."/>
            <person name="Nishi T."/>
            <person name="Shibahara T."/>
            <person name="Tanaka T."/>
            <person name="Ishii S."/>
            <person name="Yamamoto J."/>
            <person name="Saito K."/>
            <person name="Kawai Y."/>
            <person name="Isono Y."/>
            <person name="Nakamura Y."/>
            <person name="Nagahari K."/>
            <person name="Murakami K."/>
            <person name="Yasuda T."/>
            <person name="Iwayanagi T."/>
            <person name="Wagatsuma M."/>
            <person name="Shiratori A."/>
            <person name="Sudo H."/>
            <person name="Hosoiri T."/>
            <person name="Kaku Y."/>
            <person name="Kodaira H."/>
            <person name="Kondo H."/>
            <person name="Sugawara M."/>
            <person name="Takahashi M."/>
            <person name="Kanda K."/>
            <person name="Yokoi T."/>
            <person name="Furuya T."/>
            <person name="Kikkawa E."/>
            <person name="Omura Y."/>
            <person name="Abe K."/>
            <person name="Kamihara K."/>
            <person name="Katsuta N."/>
            <person name="Sato K."/>
            <person name="Tanikawa M."/>
            <person name="Yamazaki M."/>
            <person name="Ninomiya K."/>
            <person name="Ishibashi T."/>
            <person name="Yamashita H."/>
            <person name="Murakawa K."/>
            <person name="Fujimori K."/>
            <person name="Tanai H."/>
            <person name="Kimata M."/>
            <person name="Watanabe M."/>
            <person name="Hiraoka S."/>
            <person name="Chiba Y."/>
            <person name="Ishida S."/>
            <person name="Ono Y."/>
            <person name="Takiguchi S."/>
            <person name="Watanabe S."/>
            <person name="Yosida M."/>
            <person name="Hotuta T."/>
            <person name="Kusano J."/>
            <person name="Kanehori K."/>
            <person name="Takahashi-Fujii A."/>
            <person name="Hara H."/>
            <person name="Tanase T.-O."/>
            <person name="Nomura Y."/>
            <person name="Togiya S."/>
            <person name="Komai F."/>
            <person name="Hara R."/>
            <person name="Takeuchi K."/>
            <person name="Arita M."/>
            <person name="Imose N."/>
            <person name="Musashino K."/>
            <person name="Yuuki H."/>
            <person name="Oshima A."/>
            <person name="Sasaki N."/>
            <person name="Aotsuka S."/>
            <person name="Yoshikawa Y."/>
            <person name="Matsunawa H."/>
            <person name="Ichihara T."/>
            <person name="Shiohata N."/>
            <person name="Sano S."/>
            <person name="Moriya S."/>
            <person name="Momiyama H."/>
            <person name="Satoh N."/>
            <person name="Takami S."/>
            <person name="Terashima Y."/>
            <person name="Suzuki O."/>
            <person name="Nakagawa S."/>
            <person name="Senoh A."/>
            <person name="Mizoguchi H."/>
            <person name="Goto Y."/>
            <person name="Shimizu F."/>
            <person name="Wakebe H."/>
            <person name="Hishigaki H."/>
            <person name="Watanabe T."/>
            <person name="Sugiyama A."/>
            <person name="Takemoto M."/>
            <person name="Kawakami B."/>
            <person name="Yamazaki M."/>
            <person name="Watanabe K."/>
            <person name="Kumagai A."/>
            <person name="Itakura S."/>
            <person name="Fukuzumi Y."/>
            <person name="Fujimori Y."/>
            <person name="Komiyama M."/>
            <person name="Tashiro H."/>
            <person name="Tanigami A."/>
            <person name="Fujiwara T."/>
            <person name="Ono T."/>
            <person name="Yamada K."/>
            <person name="Fujii Y."/>
            <person name="Ozaki K."/>
            <person name="Hirao M."/>
            <person name="Ohmori Y."/>
            <person name="Kawabata A."/>
            <person name="Hikiji T."/>
            <person name="Kobatake N."/>
            <person name="Inagaki H."/>
            <person name="Ikema Y."/>
            <person name="Okamoto S."/>
            <person name="Okitani R."/>
            <person name="Kawakami T."/>
            <person name="Noguchi S."/>
            <person name="Itoh T."/>
            <person name="Shigeta K."/>
            <person name="Senba T."/>
            <person name="Matsumura K."/>
            <person name="Nakajima Y."/>
            <person name="Mizuno T."/>
            <person name="Morinaga M."/>
            <person name="Sasaki M."/>
            <person name="Togashi T."/>
            <person name="Oyama M."/>
            <person name="Hata H."/>
            <person name="Watanabe M."/>
            <person name="Komatsu T."/>
            <person name="Mizushima-Sugano J."/>
            <person name="Satoh T."/>
            <person name="Shirai Y."/>
            <person name="Takahashi Y."/>
            <person name="Nakagawa K."/>
            <person name="Okumura K."/>
            <person name="Nagase T."/>
            <person name="Nomura N."/>
            <person name="Kikuchi H."/>
            <person name="Masuho Y."/>
            <person name="Yamashita R."/>
            <person name="Nakai K."/>
            <person name="Yada T."/>
            <person name="Nakamura Y."/>
            <person name="Ohara O."/>
            <person name="Isogai T."/>
            <person name="Sugano S."/>
        </authorList>
    </citation>
    <scope>NUCLEOTIDE SEQUENCE [LARGE SCALE MRNA] (ISOFORM 1)</scope>
    <source>
        <tissue>Amygdala</tissue>
    </source>
</reference>
<reference key="10">
    <citation type="journal article" date="2003" name="Nature">
        <title>The DNA sequence of human chromosome 7.</title>
        <authorList>
            <person name="Hillier L.W."/>
            <person name="Fulton R.S."/>
            <person name="Fulton L.A."/>
            <person name="Graves T.A."/>
            <person name="Pepin K.H."/>
            <person name="Wagner-McPherson C."/>
            <person name="Layman D."/>
            <person name="Maas J."/>
            <person name="Jaeger S."/>
            <person name="Walker R."/>
            <person name="Wylie K."/>
            <person name="Sekhon M."/>
            <person name="Becker M.C."/>
            <person name="O'Laughlin M.D."/>
            <person name="Schaller M.E."/>
            <person name="Fewell G.A."/>
            <person name="Delehaunty K.D."/>
            <person name="Miner T.L."/>
            <person name="Nash W.E."/>
            <person name="Cordes M."/>
            <person name="Du H."/>
            <person name="Sun H."/>
            <person name="Edwards J."/>
            <person name="Bradshaw-Cordum H."/>
            <person name="Ali J."/>
            <person name="Andrews S."/>
            <person name="Isak A."/>
            <person name="Vanbrunt A."/>
            <person name="Nguyen C."/>
            <person name="Du F."/>
            <person name="Lamar B."/>
            <person name="Courtney L."/>
            <person name="Kalicki J."/>
            <person name="Ozersky P."/>
            <person name="Bielicki L."/>
            <person name="Scott K."/>
            <person name="Holmes A."/>
            <person name="Harkins R."/>
            <person name="Harris A."/>
            <person name="Strong C.M."/>
            <person name="Hou S."/>
            <person name="Tomlinson C."/>
            <person name="Dauphin-Kohlberg S."/>
            <person name="Kozlowicz-Reilly A."/>
            <person name="Leonard S."/>
            <person name="Rohlfing T."/>
            <person name="Rock S.M."/>
            <person name="Tin-Wollam A.-M."/>
            <person name="Abbott A."/>
            <person name="Minx P."/>
            <person name="Maupin R."/>
            <person name="Strowmatt C."/>
            <person name="Latreille P."/>
            <person name="Miller N."/>
            <person name="Johnson D."/>
            <person name="Murray J."/>
            <person name="Woessner J.P."/>
            <person name="Wendl M.C."/>
            <person name="Yang S.-P."/>
            <person name="Schultz B.R."/>
            <person name="Wallis J.W."/>
            <person name="Spieth J."/>
            <person name="Bieri T.A."/>
            <person name="Nelson J.O."/>
            <person name="Berkowicz N."/>
            <person name="Wohldmann P.E."/>
            <person name="Cook L.L."/>
            <person name="Hickenbotham M.T."/>
            <person name="Eldred J."/>
            <person name="Williams D."/>
            <person name="Bedell J.A."/>
            <person name="Mardis E.R."/>
            <person name="Clifton S.W."/>
            <person name="Chissoe S.L."/>
            <person name="Marra M.A."/>
            <person name="Raymond C."/>
            <person name="Haugen E."/>
            <person name="Gillett W."/>
            <person name="Zhou Y."/>
            <person name="James R."/>
            <person name="Phelps K."/>
            <person name="Iadanoto S."/>
            <person name="Bubb K."/>
            <person name="Simms E."/>
            <person name="Levy R."/>
            <person name="Clendenning J."/>
            <person name="Kaul R."/>
            <person name="Kent W.J."/>
            <person name="Furey T.S."/>
            <person name="Baertsch R.A."/>
            <person name="Brent M.R."/>
            <person name="Keibler E."/>
            <person name="Flicek P."/>
            <person name="Bork P."/>
            <person name="Suyama M."/>
            <person name="Bailey J.A."/>
            <person name="Portnoy M.E."/>
            <person name="Torrents D."/>
            <person name="Chinwalla A.T."/>
            <person name="Gish W.R."/>
            <person name="Eddy S.R."/>
            <person name="McPherson J.D."/>
            <person name="Olson M.V."/>
            <person name="Eichler E.E."/>
            <person name="Green E.D."/>
            <person name="Waterston R.H."/>
            <person name="Wilson R.K."/>
        </authorList>
    </citation>
    <scope>NUCLEOTIDE SEQUENCE [LARGE SCALE GENOMIC DNA]</scope>
</reference>
<reference key="11">
    <citation type="journal article" date="2003" name="Science">
        <title>Human chromosome 7: DNA sequence and biology.</title>
        <authorList>
            <person name="Scherer S.W."/>
            <person name="Cheung J."/>
            <person name="MacDonald J.R."/>
            <person name="Osborne L.R."/>
            <person name="Nakabayashi K."/>
            <person name="Herbrick J.-A."/>
            <person name="Carson A.R."/>
            <person name="Parker-Katiraee L."/>
            <person name="Skaug J."/>
            <person name="Khaja R."/>
            <person name="Zhang J."/>
            <person name="Hudek A.K."/>
            <person name="Li M."/>
            <person name="Haddad M."/>
            <person name="Duggan G.E."/>
            <person name="Fernandez B.A."/>
            <person name="Kanematsu E."/>
            <person name="Gentles S."/>
            <person name="Christopoulos C.C."/>
            <person name="Choufani S."/>
            <person name="Kwasnicka D."/>
            <person name="Zheng X.H."/>
            <person name="Lai Z."/>
            <person name="Nusskern D.R."/>
            <person name="Zhang Q."/>
            <person name="Gu Z."/>
            <person name="Lu F."/>
            <person name="Zeesman S."/>
            <person name="Nowaczyk M.J."/>
            <person name="Teshima I."/>
            <person name="Chitayat D."/>
            <person name="Shuman C."/>
            <person name="Weksberg R."/>
            <person name="Zackai E.H."/>
            <person name="Grebe T.A."/>
            <person name="Cox S.R."/>
            <person name="Kirkpatrick S.J."/>
            <person name="Rahman N."/>
            <person name="Friedman J.M."/>
            <person name="Heng H.H.Q."/>
            <person name="Pelicci P.G."/>
            <person name="Lo-Coco F."/>
            <person name="Belloni E."/>
            <person name="Shaffer L.G."/>
            <person name="Pober B."/>
            <person name="Morton C.C."/>
            <person name="Gusella J.F."/>
            <person name="Bruns G.A.P."/>
            <person name="Korf B.R."/>
            <person name="Quade B.J."/>
            <person name="Ligon A.H."/>
            <person name="Ferguson H."/>
            <person name="Higgins A.W."/>
            <person name="Leach N.T."/>
            <person name="Herrick S.R."/>
            <person name="Lemyre E."/>
            <person name="Farra C.G."/>
            <person name="Kim H.-G."/>
            <person name="Summers A.M."/>
            <person name="Gripp K.W."/>
            <person name="Roberts W."/>
            <person name="Szatmari P."/>
            <person name="Winsor E.J.T."/>
            <person name="Grzeschik K.-H."/>
            <person name="Teebi A."/>
            <person name="Minassian B.A."/>
            <person name="Kere J."/>
            <person name="Armengol L."/>
            <person name="Pujana M.A."/>
            <person name="Estivill X."/>
            <person name="Wilson M.D."/>
            <person name="Koop B.F."/>
            <person name="Tosi S."/>
            <person name="Moore G.E."/>
            <person name="Boright A.P."/>
            <person name="Zlotorynski E."/>
            <person name="Kerem B."/>
            <person name="Kroisel P.M."/>
            <person name="Petek E."/>
            <person name="Oscier D.G."/>
            <person name="Mould S.J."/>
            <person name="Doehner H."/>
            <person name="Doehner K."/>
            <person name="Rommens J.M."/>
            <person name="Vincent J.B."/>
            <person name="Venter J.C."/>
            <person name="Li P.W."/>
            <person name="Mural R.J."/>
            <person name="Adams M.D."/>
            <person name="Tsui L.-C."/>
        </authorList>
    </citation>
    <scope>NUCLEOTIDE SEQUENCE [LARGE SCALE GENOMIC DNA]</scope>
</reference>
<reference key="12">
    <citation type="submission" date="2005-09" db="EMBL/GenBank/DDBJ databases">
        <authorList>
            <person name="Mural R.J."/>
            <person name="Istrail S."/>
            <person name="Sutton G."/>
            <person name="Florea L."/>
            <person name="Halpern A.L."/>
            <person name="Mobarry C.M."/>
            <person name="Lippert R."/>
            <person name="Walenz B."/>
            <person name="Shatkay H."/>
            <person name="Dew I."/>
            <person name="Miller J.R."/>
            <person name="Flanigan M.J."/>
            <person name="Edwards N.J."/>
            <person name="Bolanos R."/>
            <person name="Fasulo D."/>
            <person name="Halldorsson B.V."/>
            <person name="Hannenhalli S."/>
            <person name="Turner R."/>
            <person name="Yooseph S."/>
            <person name="Lu F."/>
            <person name="Nusskern D.R."/>
            <person name="Shue B.C."/>
            <person name="Zheng X.H."/>
            <person name="Zhong F."/>
            <person name="Delcher A.L."/>
            <person name="Huson D.H."/>
            <person name="Kravitz S.A."/>
            <person name="Mouchard L."/>
            <person name="Reinert K."/>
            <person name="Remington K.A."/>
            <person name="Clark A.G."/>
            <person name="Waterman M.S."/>
            <person name="Eichler E.E."/>
            <person name="Adams M.D."/>
            <person name="Hunkapiller M.W."/>
            <person name="Myers E.W."/>
            <person name="Venter J.C."/>
        </authorList>
    </citation>
    <scope>NUCLEOTIDE SEQUENCE [LARGE SCALE GENOMIC DNA]</scope>
</reference>
<reference key="13">
    <citation type="journal article" date="2004" name="Genome Res.">
        <title>The status, quality, and expansion of the NIH full-length cDNA project: the Mammalian Gene Collection (MGC).</title>
        <authorList>
            <consortium name="The MGC Project Team"/>
        </authorList>
    </citation>
    <scope>NUCLEOTIDE SEQUENCE [LARGE SCALE MRNA] (ISOFORM 1)</scope>
</reference>
<reference key="14">
    <citation type="journal article" date="2004" name="Protein Sci.">
        <title>Signal peptide prediction based on analysis of experimentally verified cleavage sites.</title>
        <authorList>
            <person name="Zhang Z."/>
            <person name="Henzel W.J."/>
        </authorList>
    </citation>
    <scope>PROTEIN SEQUENCE OF 25-39</scope>
</reference>
<reference key="15">
    <citation type="journal article" date="1995" name="Endocrinology">
        <title>Alternative splicing of a 48-nucleotide exon generates two isoforms of the human calcitonin receptor.</title>
        <authorList>
            <person name="Nussenzveig D.R."/>
            <person name="Mathew S."/>
            <person name="Gershengorn M.C."/>
        </authorList>
    </citation>
    <scope>ALTERNATIVE SPLICING</scope>
    <source>
        <tissue>Placenta</tissue>
    </source>
</reference>
<reference key="16">
    <citation type="journal article" date="1995" name="Biochem. Biophys. Res. Commun.">
        <title>A new type of human calcitonin receptor isoform generated by alternative splicing.</title>
        <authorList>
            <person name="Nakamura M."/>
            <person name="Hashimoto T."/>
            <person name="Nakajima T."/>
            <person name="Ichii S."/>
            <person name="Furuyama J."/>
            <person name="Ishihara Y."/>
            <person name="Kakudo K."/>
        </authorList>
    </citation>
    <scope>ALTERNATIVE SPLICING</scope>
</reference>
<reference key="17">
    <citation type="journal article" date="1995" name="Mol. Endocrinol.">
        <title>Functionally different isoforms of the human calcitonin receptor result from alternative splicing of the gene transcript.</title>
        <authorList>
            <person name="Moore E.E."/>
            <person name="Kuestner R.E."/>
            <person name="Stroop S.D."/>
            <person name="Grant F.J."/>
            <person name="Matthewes S.L."/>
            <person name="Brady C.L."/>
            <person name="Sexton P.M."/>
            <person name="Findlay D.M."/>
        </authorList>
    </citation>
    <scope>ALTERNATIVE SPLICING</scope>
    <scope>FUNCTION</scope>
</reference>
<reference key="18">
    <citation type="journal article" date="2000" name="Biochem. Biophys. Res. Commun.">
        <title>Multiple promoters regulate human calcitonin receptor gene expression.</title>
        <authorList>
            <person name="Hebden C."/>
            <person name="Smalt R."/>
            <person name="Chambers T."/>
            <person name="Pondel M.D."/>
        </authorList>
    </citation>
    <scope>ALTERNATIVE PROMOTER USAGE</scope>
</reference>
<reference key="19">
    <citation type="journal article" date="2004" name="J. Neurochem.">
        <title>Identification of a novel family of G protein-coupled receptor associated sorting proteins.</title>
        <authorList>
            <person name="Simonin F."/>
            <person name="Karcher P."/>
            <person name="Boeuf J.J.-M."/>
            <person name="Matifas A."/>
            <person name="Kieffer B.L."/>
        </authorList>
    </citation>
    <scope>INTERACTION WITH GPRASP2</scope>
</reference>
<reference key="20">
    <citation type="journal article" date="1998" name="Biochem. Biophys. Res. Commun.">
        <title>Polymorphisms of the calcitonin receptor gene are associated with bone mineral density in postmenopausal Italian women.</title>
        <authorList>
            <person name="Masi L."/>
            <person name="Becherini L."/>
            <person name="Colli E."/>
            <person name="Gennari L."/>
            <person name="Mansani R."/>
            <person name="Falchetti A."/>
            <person name="Becorpi A.M."/>
            <person name="Cepollaro C."/>
            <person name="Gonnelli S."/>
            <person name="Tanini A."/>
            <person name="Brandi M.L."/>
        </authorList>
    </citation>
    <scope>INVOLVEMENT IN LUMBAR BMD</scope>
</reference>
<reference key="21">
    <citation type="journal article" date="2013" name="Br. J. Pharmacol.">
        <title>Receptor activity-modifying protein-dependent impairment of calcitonin receptor splice variant Delta(1-47)hCT((a)) function.</title>
        <authorList>
            <person name="Qi T."/>
            <person name="Dong M."/>
            <person name="Watkins H.A."/>
            <person name="Wootten D."/>
            <person name="Miller L.J."/>
            <person name="Hay D.L."/>
        </authorList>
    </citation>
    <scope>ALTERNATIVE SPLICING (ISOFORM 4)</scope>
</reference>
<reference evidence="21 22" key="22">
    <citation type="journal article" date="2020" name="J. Mol. Biol.">
        <title>Calcitonin Receptor N-Glycosylation Enhances Peptide Hormone Affinity by Controlling Receptor Dynamics.</title>
        <authorList>
            <person name="Lee S.M."/>
            <person name="Jeong Y."/>
            <person name="Simms J."/>
            <person name="Warner M.L."/>
            <person name="Poyner D.R."/>
            <person name="Chung K.Y."/>
            <person name="Pioszak A.A."/>
        </authorList>
    </citation>
    <scope>X-RAY CRYSTALLOGRAPHY (1.78 ANGSTROMS) OF 38-141 IN COMPLEX WITH CALCITONIN-1</scope>
    <scope>GLYCOSYLATION AT ASN-73; ASN-125 AND ASN-130</scope>
    <scope>DISULFIDE BONDS</scope>
</reference>
<reference evidence="23 24 25 26 27 28 29 30 31 32" key="23">
    <citation type="journal article" date="2022" name="Science">
        <title>A structural basis for amylin receptor phenotype.</title>
        <authorList>
            <person name="Cao J."/>
            <person name="Belousoff M.J."/>
            <person name="Liang Y.L."/>
            <person name="Johnson R.M."/>
            <person name="Josephs T.M."/>
            <person name="Fletcher M.M."/>
            <person name="Christopoulos A."/>
            <person name="Hay D.L."/>
            <person name="Danev R."/>
            <person name="Wootten D."/>
            <person name="Sexton P.M."/>
        </authorList>
    </citation>
    <scope>STRUCTURE BY ELECTRON MICROSCOPY (2.20 ANGSTROMS) OF 25-474 IN COMPLEX WITH IAPP; CALCA; RAMP1; RAMP2; RAMP3 AND G PROTEIN</scope>
    <scope>DISULFIDE BONDS</scope>
    <scope>INTERACTION WITH RAMP1; RAMP2; RAMP3 AND G PROTEIN</scope>
    <scope>FUNCTION</scope>
</reference>
<reference evidence="33" key="24">
    <citation type="journal article" date="2024" name="Biochemistry">
        <title>Cryo-EM Structure of the Human Amylin 1 Receptor in Complex with CGRP and Gs Protein.</title>
        <authorList>
            <person name="Cao J."/>
            <person name="Belousoff M.J."/>
            <person name="Danev R."/>
            <person name="Christopoulos A."/>
            <person name="Wootten D."/>
            <person name="Sexton P.M."/>
        </authorList>
    </citation>
    <scope>STRUCTURE BY ELECTRON MICROSCOPY (2.40 ANGSTROMS) OF 25-474 IN COMPLEX WITH RAMP1; CALCA AND G PROTEINS</scope>
    <scope>DISULFIDE BONDS</scope>
    <scope>FUNCTION</scope>
    <scope>INTERACTION WITH RAMP1 AND G PROTEINS</scope>
</reference>
<reference key="25">
    <citation type="journal article" date="1998" name="Biochem. Biophys. Res. Commun.">
        <title>Allelic variants of human calcitonin receptor: distribution and association with bone mass in postmenopausal Italian women.</title>
        <authorList>
            <person name="Masi L."/>
            <person name="Becherini L."/>
            <person name="Gennari L."/>
            <person name="Colli E."/>
            <person name="Mansani R."/>
            <person name="Falchetti A."/>
            <person name="Cepollaro C."/>
            <person name="Gonnelli S."/>
            <person name="Tanini A."/>
            <person name="Brandi M.L."/>
        </authorList>
    </citation>
    <scope>CHARACTERIZATION OF VARIANT PRO-447</scope>
</reference>
<reference key="26">
    <citation type="journal article" date="1998" name="Hum. Mol. Genet.">
        <title>Calcitonin receptor polymorphism is associated with a decreased fracture risk in post-menopausal women.</title>
        <authorList>
            <person name="Taboulet J."/>
            <person name="Frenkian M."/>
            <person name="Frendo J.L."/>
            <person name="Feingold N."/>
            <person name="Jullienne A."/>
            <person name="de Vernejoul M.-C."/>
        </authorList>
    </citation>
    <scope>CHARACTERIZATION OF VARIANT PRO-447</scope>
</reference>
<dbReference type="EMBL" id="L00587">
    <property type="protein sequence ID" value="AAA35640.1"/>
    <property type="molecule type" value="mRNA"/>
</dbReference>
<dbReference type="EMBL" id="X69920">
    <property type="protein sequence ID" value="CAA49541.1"/>
    <property type="molecule type" value="mRNA"/>
</dbReference>
<dbReference type="EMBL" id="U26553">
    <property type="protein sequence ID" value="AAC50300.1"/>
    <property type="molecule type" value="mRNA"/>
</dbReference>
<dbReference type="EMBL" id="U26554">
    <property type="protein sequence ID" value="AAC50301.1"/>
    <property type="molecule type" value="mRNA"/>
</dbReference>
<dbReference type="EMBL" id="X82466">
    <property type="protein sequence ID" value="CAA57849.1"/>
    <property type="molecule type" value="mRNA"/>
</dbReference>
<dbReference type="EMBL" id="S77876">
    <property type="protein sequence ID" value="AAD14268.1"/>
    <property type="molecule type" value="Genomic_DNA"/>
</dbReference>
<dbReference type="EMBL" id="S77875">
    <property type="protein sequence ID" value="AAD14268.1"/>
    <property type="status" value="JOINED"/>
    <property type="molecule type" value="Genomic_DNA"/>
</dbReference>
<dbReference type="EMBL" id="AB022177">
    <property type="protein sequence ID" value="BAA86929.1"/>
    <property type="molecule type" value="mRNA"/>
</dbReference>
<dbReference type="EMBL" id="AB022178">
    <property type="protein sequence ID" value="BAA86928.1"/>
    <property type="molecule type" value="mRNA"/>
</dbReference>
<dbReference type="EMBL" id="AJ831406">
    <property type="protein sequence ID" value="CAH40796.1"/>
    <property type="molecule type" value="mRNA"/>
</dbReference>
<dbReference type="EMBL" id="AJ831407">
    <property type="protein sequence ID" value="CAH40797.1"/>
    <property type="molecule type" value="mRNA"/>
</dbReference>
<dbReference type="EMBL" id="FN994995">
    <property type="protein sequence ID" value="CBN80567.1"/>
    <property type="molecule type" value="mRNA"/>
</dbReference>
<dbReference type="EMBL" id="FN994996">
    <property type="protein sequence ID" value="CBN80568.1"/>
    <property type="molecule type" value="mRNA"/>
</dbReference>
<dbReference type="EMBL" id="AY430048">
    <property type="protein sequence ID" value="AAR06949.1"/>
    <property type="molecule type" value="mRNA"/>
</dbReference>
<dbReference type="EMBL" id="AK313996">
    <property type="protein sequence ID" value="BAG36708.1"/>
    <property type="molecule type" value="mRNA"/>
</dbReference>
<dbReference type="EMBL" id="AC003078">
    <property type="protein sequence ID" value="AAB83945.1"/>
    <property type="molecule type" value="Genomic_DNA"/>
</dbReference>
<dbReference type="EMBL" id="AC005024">
    <property type="status" value="NOT_ANNOTATED_CDS"/>
    <property type="molecule type" value="Genomic_DNA"/>
</dbReference>
<dbReference type="EMBL" id="CH236949">
    <property type="protein sequence ID" value="EAL24142.1"/>
    <property type="molecule type" value="Genomic_DNA"/>
</dbReference>
<dbReference type="EMBL" id="CH471091">
    <property type="protein sequence ID" value="EAW76814.1"/>
    <property type="molecule type" value="Genomic_DNA"/>
</dbReference>
<dbReference type="EMBL" id="BC069611">
    <property type="protein sequence ID" value="AAH69611.1"/>
    <property type="molecule type" value="mRNA"/>
</dbReference>
<dbReference type="EMBL" id="BC075028">
    <property type="protein sequence ID" value="AAH75028.2"/>
    <property type="molecule type" value="mRNA"/>
</dbReference>
<dbReference type="CCDS" id="CCDS55125.2">
    <molecule id="P30988-1"/>
</dbReference>
<dbReference type="CCDS" id="CCDS5631.1">
    <molecule id="P30988-2"/>
</dbReference>
<dbReference type="PIR" id="I37217">
    <property type="entry name" value="I37217"/>
</dbReference>
<dbReference type="PIR" id="S34486">
    <property type="entry name" value="S34486"/>
</dbReference>
<dbReference type="RefSeq" id="NP_001158209.2">
    <molecule id="P30988-1"/>
    <property type="nucleotide sequence ID" value="NM_001164737.3"/>
</dbReference>
<dbReference type="RefSeq" id="NP_001158210.1">
    <molecule id="P30988-2"/>
    <property type="nucleotide sequence ID" value="NM_001164738.2"/>
</dbReference>
<dbReference type="RefSeq" id="NP_001733.1">
    <molecule id="P30988-2"/>
    <property type="nucleotide sequence ID" value="NM_001742.4"/>
</dbReference>
<dbReference type="PDB" id="5II0">
    <property type="method" value="X-ray"/>
    <property type="resolution" value="2.10 A"/>
    <property type="chains" value="A/B/C=25-144"/>
</dbReference>
<dbReference type="PDB" id="5UZ7">
    <property type="method" value="EM"/>
    <property type="resolution" value="4.10 A"/>
    <property type="chains" value="R=25-474"/>
</dbReference>
<dbReference type="PDB" id="6NIY">
    <property type="method" value="EM"/>
    <property type="resolution" value="3.34 A"/>
    <property type="chains" value="R=1-474"/>
</dbReference>
<dbReference type="PDB" id="6PFO">
    <property type="method" value="X-ray"/>
    <property type="resolution" value="1.78 A"/>
    <property type="chains" value="A/B=38-141"/>
</dbReference>
<dbReference type="PDB" id="6PGQ">
    <property type="method" value="X-ray"/>
    <property type="resolution" value="2.85 A"/>
    <property type="chains" value="A=39-141"/>
</dbReference>
<dbReference type="PDB" id="7TYF">
    <property type="method" value="EM"/>
    <property type="resolution" value="2.20 A"/>
    <property type="chains" value="R=25-474"/>
</dbReference>
<dbReference type="PDB" id="7TYH">
    <property type="method" value="EM"/>
    <property type="resolution" value="3.30 A"/>
    <property type="chains" value="R=25-474"/>
</dbReference>
<dbReference type="PDB" id="7TYI">
    <property type="method" value="EM"/>
    <property type="resolution" value="3.30 A"/>
    <property type="chains" value="R=25-474"/>
</dbReference>
<dbReference type="PDB" id="7TYL">
    <property type="method" value="EM"/>
    <property type="resolution" value="3.30 A"/>
    <property type="chains" value="R=25-474"/>
</dbReference>
<dbReference type="PDB" id="7TYN">
    <property type="method" value="EM"/>
    <property type="resolution" value="2.60 A"/>
    <property type="chains" value="R=25-474"/>
</dbReference>
<dbReference type="PDB" id="7TYO">
    <property type="method" value="EM"/>
    <property type="resolution" value="2.70 A"/>
    <property type="chains" value="R=25-474"/>
</dbReference>
<dbReference type="PDB" id="7TYW">
    <property type="method" value="EM"/>
    <property type="resolution" value="3.00 A"/>
    <property type="chains" value="R=25-474"/>
</dbReference>
<dbReference type="PDB" id="7TYX">
    <property type="method" value="EM"/>
    <property type="resolution" value="2.55 A"/>
    <property type="chains" value="R=25-474"/>
</dbReference>
<dbReference type="PDB" id="7TYY">
    <property type="method" value="EM"/>
    <property type="resolution" value="3.00 A"/>
    <property type="chains" value="R=25-474"/>
</dbReference>
<dbReference type="PDB" id="7TZF">
    <property type="method" value="EM"/>
    <property type="resolution" value="2.40 A"/>
    <property type="chains" value="R=25-474"/>
</dbReference>
<dbReference type="PDB" id="8F0J">
    <property type="method" value="EM"/>
    <property type="resolution" value="2.00 A"/>
    <property type="chains" value="R=25-474"/>
</dbReference>
<dbReference type="PDB" id="8F0K">
    <property type="method" value="EM"/>
    <property type="resolution" value="1.90 A"/>
    <property type="chains" value="R=25-474"/>
</dbReference>
<dbReference type="PDB" id="8F2A">
    <property type="method" value="EM"/>
    <property type="resolution" value="2.20 A"/>
    <property type="chains" value="R=25-474"/>
</dbReference>
<dbReference type="PDB" id="8F2B">
    <property type="method" value="EM"/>
    <property type="resolution" value="2.00 A"/>
    <property type="chains" value="R=25-474"/>
</dbReference>
<dbReference type="PDB" id="9AUC">
    <property type="method" value="EM"/>
    <property type="resolution" value="2.40 A"/>
    <property type="chains" value="R=25-474"/>
</dbReference>
<dbReference type="PDBsum" id="5II0"/>
<dbReference type="PDBsum" id="5UZ7"/>
<dbReference type="PDBsum" id="6NIY"/>
<dbReference type="PDBsum" id="6PFO"/>
<dbReference type="PDBsum" id="6PGQ"/>
<dbReference type="PDBsum" id="7TYF"/>
<dbReference type="PDBsum" id="7TYH"/>
<dbReference type="PDBsum" id="7TYI"/>
<dbReference type="PDBsum" id="7TYL"/>
<dbReference type="PDBsum" id="7TYN"/>
<dbReference type="PDBsum" id="7TYO"/>
<dbReference type="PDBsum" id="7TYW"/>
<dbReference type="PDBsum" id="7TYX"/>
<dbReference type="PDBsum" id="7TYY"/>
<dbReference type="PDBsum" id="7TZF"/>
<dbReference type="PDBsum" id="8F0J"/>
<dbReference type="PDBsum" id="8F0K"/>
<dbReference type="PDBsum" id="8F2A"/>
<dbReference type="PDBsum" id="8F2B"/>
<dbReference type="PDBsum" id="9AUC"/>
<dbReference type="EMDB" id="EMD-26178"/>
<dbReference type="EMDB" id="EMD-26179"/>
<dbReference type="EMDB" id="EMD-26180"/>
<dbReference type="EMDB" id="EMD-26184"/>
<dbReference type="EMDB" id="EMD-26188"/>
<dbReference type="EMDB" id="EMD-26190"/>
<dbReference type="EMDB" id="EMD-26196"/>
<dbReference type="EMDB" id="EMD-26197"/>
<dbReference type="EMDB" id="EMD-26199"/>
<dbReference type="EMDB" id="EMD-26208"/>
<dbReference type="EMDB" id="EMD-28758"/>
<dbReference type="EMDB" id="EMD-28759"/>
<dbReference type="EMDB" id="EMD-28810"/>
<dbReference type="EMDB" id="EMD-28812"/>
<dbReference type="EMDB" id="EMD-43877"/>
<dbReference type="EMDB" id="EMD-8623"/>
<dbReference type="EMDB" id="EMD-9382"/>
<dbReference type="SMR" id="P30988"/>
<dbReference type="BioGRID" id="107250">
    <property type="interactions" value="6"/>
</dbReference>
<dbReference type="ComplexPortal" id="CPX-2173">
    <property type="entry name" value="Amylin receptor 1 complex"/>
</dbReference>
<dbReference type="ComplexPortal" id="CPX-3186">
    <property type="entry name" value="Amylin receptor 2 complex"/>
</dbReference>
<dbReference type="ComplexPortal" id="CPX-3187">
    <property type="entry name" value="Amylin receptor 3 complex"/>
</dbReference>
<dbReference type="CORUM" id="P30988"/>
<dbReference type="FunCoup" id="P30988">
    <property type="interactions" value="572"/>
</dbReference>
<dbReference type="IntAct" id="P30988">
    <property type="interactions" value="11"/>
</dbReference>
<dbReference type="MINT" id="P30988"/>
<dbReference type="STRING" id="9606.ENSP00000352561"/>
<dbReference type="BindingDB" id="P30988"/>
<dbReference type="ChEMBL" id="CHEMBL1832"/>
<dbReference type="DrugBank" id="DB01278">
    <property type="generic name" value="Pramlintide"/>
</dbReference>
<dbReference type="DrugBank" id="DB00017">
    <property type="generic name" value="Salmon calcitonin"/>
</dbReference>
<dbReference type="DrugCentral" id="P30988"/>
<dbReference type="GuidetoPHARMACOLOGY" id="43"/>
<dbReference type="TCDB" id="9.A.14.4.1">
    <property type="family name" value="the g-protein-coupled receptor (gpcr) family"/>
</dbReference>
<dbReference type="GlyCosmos" id="P30988">
    <property type="glycosylation" value="4 sites, No reported glycans"/>
</dbReference>
<dbReference type="GlyGen" id="P30988">
    <property type="glycosylation" value="4 sites"/>
</dbReference>
<dbReference type="iPTMnet" id="P30988"/>
<dbReference type="PhosphoSitePlus" id="P30988"/>
<dbReference type="BioMuta" id="CALCR"/>
<dbReference type="DMDM" id="550544247"/>
<dbReference type="MassIVE" id="P30988"/>
<dbReference type="PaxDb" id="9606-ENSP00000352561"/>
<dbReference type="PeptideAtlas" id="P30988"/>
<dbReference type="ProteomicsDB" id="27039"/>
<dbReference type="ProteomicsDB" id="54752">
    <molecule id="P30988-1"/>
</dbReference>
<dbReference type="ProteomicsDB" id="54753">
    <molecule id="P30988-2"/>
</dbReference>
<dbReference type="ProteomicsDB" id="54754">
    <molecule id="P30988-3"/>
</dbReference>
<dbReference type="ProteomicsDB" id="620"/>
<dbReference type="Antibodypedia" id="15689">
    <property type="antibodies" value="417 antibodies from 23 providers"/>
</dbReference>
<dbReference type="DNASU" id="799"/>
<dbReference type="Ensembl" id="ENST00000394441.5">
    <molecule id="P30988-2"/>
    <property type="protein sequence ID" value="ENSP00000377959.1"/>
    <property type="gene ID" value="ENSG00000004948.16"/>
</dbReference>
<dbReference type="Ensembl" id="ENST00000415529.2">
    <molecule id="P30988-5"/>
    <property type="protein sequence ID" value="ENSP00000413179.1"/>
    <property type="gene ID" value="ENSG00000004948.16"/>
</dbReference>
<dbReference type="Ensembl" id="ENST00000423724.5">
    <molecule id="P30988-6"/>
    <property type="protein sequence ID" value="ENSP00000391369.1"/>
    <property type="gene ID" value="ENSG00000004948.16"/>
</dbReference>
<dbReference type="Ensembl" id="ENST00000426151.7">
    <molecule id="P30988-2"/>
    <property type="protein sequence ID" value="ENSP00000389295.1"/>
    <property type="gene ID" value="ENSG00000004948.16"/>
</dbReference>
<dbReference type="Ensembl" id="ENST00000649521.1">
    <molecule id="P30988-1"/>
    <property type="protein sequence ID" value="ENSP00000497687.1"/>
    <property type="gene ID" value="ENSG00000004948.16"/>
</dbReference>
<dbReference type="GeneID" id="799"/>
<dbReference type="KEGG" id="hsa:799"/>
<dbReference type="MANE-Select" id="ENST00000426151.7">
    <property type="protein sequence ID" value="ENSP00000389295.1"/>
    <property type="RefSeq nucleotide sequence ID" value="NM_001742.4"/>
    <property type="RefSeq protein sequence ID" value="NP_001733.1"/>
</dbReference>
<dbReference type="UCSC" id="uc003umw.3">
    <molecule id="P30988-2"/>
    <property type="organism name" value="human"/>
</dbReference>
<dbReference type="AGR" id="HGNC:1440"/>
<dbReference type="CTD" id="799"/>
<dbReference type="DisGeNET" id="799"/>
<dbReference type="GeneCards" id="CALCR"/>
<dbReference type="HGNC" id="HGNC:1440">
    <property type="gene designation" value="CALCR"/>
</dbReference>
<dbReference type="MalaCards" id="CALCR"/>
<dbReference type="MIM" id="114131">
    <property type="type" value="gene"/>
</dbReference>
<dbReference type="neXtProt" id="NX_P30988"/>
<dbReference type="OpenTargets" id="ENSG00000004948"/>
<dbReference type="PharmGKB" id="PA26032"/>
<dbReference type="VEuPathDB" id="HostDB:ENSG00000004948"/>
<dbReference type="eggNOG" id="KOG4564">
    <property type="taxonomic scope" value="Eukaryota"/>
</dbReference>
<dbReference type="GeneTree" id="ENSGT00940000155380"/>
<dbReference type="HOGENOM" id="CLU_002753_4_6_1"/>
<dbReference type="InParanoid" id="P30988"/>
<dbReference type="OMA" id="NIPVYIC"/>
<dbReference type="OrthoDB" id="16753at2759"/>
<dbReference type="PAN-GO" id="P30988">
    <property type="GO annotations" value="6 GO annotations based on evolutionary models"/>
</dbReference>
<dbReference type="TreeFam" id="TF315710"/>
<dbReference type="PathwayCommons" id="P30988"/>
<dbReference type="Reactome" id="R-HSA-418555">
    <property type="pathway name" value="G alpha (s) signalling events"/>
</dbReference>
<dbReference type="Reactome" id="R-HSA-419812">
    <property type="pathway name" value="Calcitonin-like ligand receptors"/>
</dbReference>
<dbReference type="SignaLink" id="P30988"/>
<dbReference type="BioGRID-ORCS" id="799">
    <property type="hits" value="11 hits in 1149 CRISPR screens"/>
</dbReference>
<dbReference type="GeneWiki" id="Calcitonin_receptor"/>
<dbReference type="GenomeRNAi" id="799"/>
<dbReference type="Pharos" id="P30988">
    <property type="development level" value="Tclin"/>
</dbReference>
<dbReference type="PRO" id="PR:P30988"/>
<dbReference type="Proteomes" id="UP000005640">
    <property type="component" value="Chromosome 7"/>
</dbReference>
<dbReference type="RNAct" id="P30988">
    <property type="molecule type" value="protein"/>
</dbReference>
<dbReference type="Bgee" id="ENSG00000004948">
    <property type="expression patterns" value="Expressed in tibia and 49 other cell types or tissues"/>
</dbReference>
<dbReference type="ExpressionAtlas" id="P30988">
    <property type="expression patterns" value="baseline and differential"/>
</dbReference>
<dbReference type="GO" id="GO:0001669">
    <property type="term" value="C:acrosomal vesicle"/>
    <property type="evidence" value="ECO:0007669"/>
    <property type="project" value="Ensembl"/>
</dbReference>
<dbReference type="GO" id="GO:0150056">
    <property type="term" value="C:amylin receptor complex 1"/>
    <property type="evidence" value="ECO:0000314"/>
    <property type="project" value="ARUK-UCL"/>
</dbReference>
<dbReference type="GO" id="GO:0150057">
    <property type="term" value="C:amylin receptor complex 2"/>
    <property type="evidence" value="ECO:0000314"/>
    <property type="project" value="ARUK-UCL"/>
</dbReference>
<dbReference type="GO" id="GO:0150058">
    <property type="term" value="C:amylin receptor complex 3"/>
    <property type="evidence" value="ECO:0000314"/>
    <property type="project" value="ARUK-UCL"/>
</dbReference>
<dbReference type="GO" id="GO:0030424">
    <property type="term" value="C:axon"/>
    <property type="evidence" value="ECO:0000318"/>
    <property type="project" value="GO_Central"/>
</dbReference>
<dbReference type="GO" id="GO:0005929">
    <property type="term" value="C:cilium"/>
    <property type="evidence" value="ECO:0007669"/>
    <property type="project" value="Ensembl"/>
</dbReference>
<dbReference type="GO" id="GO:0005886">
    <property type="term" value="C:plasma membrane"/>
    <property type="evidence" value="ECO:0000318"/>
    <property type="project" value="GO_Central"/>
</dbReference>
<dbReference type="GO" id="GO:0097643">
    <property type="term" value="F:amylin receptor activity"/>
    <property type="evidence" value="ECO:0000314"/>
    <property type="project" value="UniProt"/>
</dbReference>
<dbReference type="GO" id="GO:0001540">
    <property type="term" value="F:amyloid-beta binding"/>
    <property type="evidence" value="ECO:0000314"/>
    <property type="project" value="ARUK-UCL"/>
</dbReference>
<dbReference type="GO" id="GO:0032841">
    <property type="term" value="F:calcitonin binding"/>
    <property type="evidence" value="ECO:0000314"/>
    <property type="project" value="UniProtKB"/>
</dbReference>
<dbReference type="GO" id="GO:0097642">
    <property type="term" value="F:calcitonin family receptor activity"/>
    <property type="evidence" value="ECO:0000314"/>
    <property type="project" value="UniProt"/>
</dbReference>
<dbReference type="GO" id="GO:0001635">
    <property type="term" value="F:calcitonin gene-related peptide receptor activity"/>
    <property type="evidence" value="ECO:0000314"/>
    <property type="project" value="UniProt"/>
</dbReference>
<dbReference type="GO" id="GO:0004948">
    <property type="term" value="F:calcitonin receptor activity"/>
    <property type="evidence" value="ECO:0000314"/>
    <property type="project" value="UniProtKB"/>
</dbReference>
<dbReference type="GO" id="GO:0007189">
    <property type="term" value="P:adenylate cyclase-activating G protein-coupled receptor signaling pathway"/>
    <property type="evidence" value="ECO:0000314"/>
    <property type="project" value="UniProtKB"/>
</dbReference>
<dbReference type="GO" id="GO:0150059">
    <property type="term" value="P:amylin receptor 1 signaling pathway"/>
    <property type="evidence" value="ECO:0000314"/>
    <property type="project" value="UniProt"/>
</dbReference>
<dbReference type="GO" id="GO:0150060">
    <property type="term" value="P:amylin receptor 2 signaling pathway"/>
    <property type="evidence" value="ECO:0000314"/>
    <property type="project" value="UniProt"/>
</dbReference>
<dbReference type="GO" id="GO:0150061">
    <property type="term" value="P:amylin receptor 3 signaling pathway"/>
    <property type="evidence" value="ECO:0000314"/>
    <property type="project" value="UniProt"/>
</dbReference>
<dbReference type="GO" id="GO:0097647">
    <property type="term" value="P:amylin receptor signaling pathway"/>
    <property type="evidence" value="ECO:0000314"/>
    <property type="project" value="UniProtKB"/>
</dbReference>
<dbReference type="GO" id="GO:0097646">
    <property type="term" value="P:calcitonin family receptor signaling pathway"/>
    <property type="evidence" value="ECO:0000314"/>
    <property type="project" value="UniProt"/>
</dbReference>
<dbReference type="GO" id="GO:1990408">
    <property type="term" value="P:calcitonin gene-related peptide receptor signaling pathway"/>
    <property type="evidence" value="ECO:0000314"/>
    <property type="project" value="UniProtKB"/>
</dbReference>
<dbReference type="GO" id="GO:0007166">
    <property type="term" value="P:cell surface receptor signaling pathway"/>
    <property type="evidence" value="ECO:0007669"/>
    <property type="project" value="InterPro"/>
</dbReference>
<dbReference type="GO" id="GO:0030279">
    <property type="term" value="P:negative regulation of ossification"/>
    <property type="evidence" value="ECO:0007669"/>
    <property type="project" value="Ensembl"/>
</dbReference>
<dbReference type="GO" id="GO:0001503">
    <property type="term" value="P:ossification"/>
    <property type="evidence" value="ECO:0007669"/>
    <property type="project" value="Ensembl"/>
</dbReference>
<dbReference type="GO" id="GO:0030316">
    <property type="term" value="P:osteoclast differentiation"/>
    <property type="evidence" value="ECO:0007669"/>
    <property type="project" value="Ensembl"/>
</dbReference>
<dbReference type="GO" id="GO:0050850">
    <property type="term" value="P:positive regulation of calcium-mediated signaling"/>
    <property type="evidence" value="ECO:0000316"/>
    <property type="project" value="ARUK-UCL"/>
</dbReference>
<dbReference type="GO" id="GO:0141163">
    <property type="term" value="P:positive regulation of cAMP/PKA signal transduction"/>
    <property type="evidence" value="ECO:0000316"/>
    <property type="project" value="ARUK-UCL"/>
</dbReference>
<dbReference type="GO" id="GO:0007204">
    <property type="term" value="P:positive regulation of cytosolic calcium ion concentration"/>
    <property type="evidence" value="ECO:0000314"/>
    <property type="project" value="UniProtKB"/>
</dbReference>
<dbReference type="GO" id="GO:0070374">
    <property type="term" value="P:positive regulation of ERK1 and ERK2 cascade"/>
    <property type="evidence" value="ECO:0000316"/>
    <property type="project" value="ARUK-UCL"/>
</dbReference>
<dbReference type="GO" id="GO:0010628">
    <property type="term" value="P:positive regulation of gene expression"/>
    <property type="evidence" value="ECO:0000316"/>
    <property type="project" value="ARUK-UCL"/>
</dbReference>
<dbReference type="GO" id="GO:0051897">
    <property type="term" value="P:positive regulation of phosphatidylinositol 3-kinase/protein kinase B signal transduction"/>
    <property type="evidence" value="ECO:0000316"/>
    <property type="project" value="ARUK-UCL"/>
</dbReference>
<dbReference type="GO" id="GO:0043488">
    <property type="term" value="P:regulation of mRNA stability"/>
    <property type="evidence" value="ECO:0007669"/>
    <property type="project" value="Ensembl"/>
</dbReference>
<dbReference type="GO" id="GO:1904645">
    <property type="term" value="P:response to amyloid-beta"/>
    <property type="evidence" value="ECO:0000316"/>
    <property type="project" value="ARUK-UCL"/>
</dbReference>
<dbReference type="GO" id="GO:0051384">
    <property type="term" value="P:response to glucocorticoid"/>
    <property type="evidence" value="ECO:0000314"/>
    <property type="project" value="UniProtKB"/>
</dbReference>
<dbReference type="CDD" id="cd15274">
    <property type="entry name" value="7tmB1_calcitonin_R"/>
    <property type="match status" value="1"/>
</dbReference>
<dbReference type="FunFam" id="1.20.1070.10:FF:000149">
    <property type="entry name" value="Calcitonin receptor"/>
    <property type="match status" value="1"/>
</dbReference>
<dbReference type="FunFam" id="4.10.1240.10:FF:000012">
    <property type="entry name" value="Calcitonin receptor"/>
    <property type="match status" value="1"/>
</dbReference>
<dbReference type="Gene3D" id="4.10.1240.10">
    <property type="entry name" value="GPCR, family 2, extracellular hormone receptor domain"/>
    <property type="match status" value="1"/>
</dbReference>
<dbReference type="Gene3D" id="1.20.1070.10">
    <property type="entry name" value="Rhodopsin 7-helix transmembrane proteins"/>
    <property type="match status" value="1"/>
</dbReference>
<dbReference type="InterPro" id="IPR050332">
    <property type="entry name" value="GPCR_2"/>
</dbReference>
<dbReference type="InterPro" id="IPR017981">
    <property type="entry name" value="GPCR_2-like_7TM"/>
</dbReference>
<dbReference type="InterPro" id="IPR001688">
    <property type="entry name" value="GPCR_2_calcitonin_rcpt"/>
</dbReference>
<dbReference type="InterPro" id="IPR003287">
    <property type="entry name" value="GPCR_2_calcitonin_rcpt_fam"/>
</dbReference>
<dbReference type="InterPro" id="IPR036445">
    <property type="entry name" value="GPCR_2_extracell_dom_sf"/>
</dbReference>
<dbReference type="InterPro" id="IPR001879">
    <property type="entry name" value="GPCR_2_extracellular_dom"/>
</dbReference>
<dbReference type="InterPro" id="IPR000832">
    <property type="entry name" value="GPCR_2_secretin-like"/>
</dbReference>
<dbReference type="InterPro" id="IPR017983">
    <property type="entry name" value="GPCR_2_secretin-like_CS"/>
</dbReference>
<dbReference type="PANTHER" id="PTHR45620:SF8">
    <property type="entry name" value="CALCITONIN RECEPTOR"/>
    <property type="match status" value="1"/>
</dbReference>
<dbReference type="PANTHER" id="PTHR45620">
    <property type="entry name" value="PDF RECEPTOR-LIKE PROTEIN-RELATED"/>
    <property type="match status" value="1"/>
</dbReference>
<dbReference type="Pfam" id="PF00002">
    <property type="entry name" value="7tm_2"/>
    <property type="match status" value="1"/>
</dbReference>
<dbReference type="Pfam" id="PF02793">
    <property type="entry name" value="HRM"/>
    <property type="match status" value="1"/>
</dbReference>
<dbReference type="PRINTS" id="PR00361">
    <property type="entry name" value="CALCITONINR"/>
</dbReference>
<dbReference type="PRINTS" id="PR01350">
    <property type="entry name" value="CTRFAMILY"/>
</dbReference>
<dbReference type="PRINTS" id="PR00249">
    <property type="entry name" value="GPCRSECRETIN"/>
</dbReference>
<dbReference type="SMART" id="SM00008">
    <property type="entry name" value="HormR"/>
    <property type="match status" value="1"/>
</dbReference>
<dbReference type="SUPFAM" id="SSF81321">
    <property type="entry name" value="Family A G protein-coupled receptor-like"/>
    <property type="match status" value="1"/>
</dbReference>
<dbReference type="SUPFAM" id="SSF111418">
    <property type="entry name" value="Hormone receptor domain"/>
    <property type="match status" value="1"/>
</dbReference>
<dbReference type="PROSITE" id="PS00649">
    <property type="entry name" value="G_PROTEIN_RECEP_F2_1"/>
    <property type="match status" value="1"/>
</dbReference>
<dbReference type="PROSITE" id="PS00650">
    <property type="entry name" value="G_PROTEIN_RECEP_F2_2"/>
    <property type="match status" value="1"/>
</dbReference>
<dbReference type="PROSITE" id="PS50227">
    <property type="entry name" value="G_PROTEIN_RECEP_F2_3"/>
    <property type="match status" value="1"/>
</dbReference>
<dbReference type="PROSITE" id="PS50261">
    <property type="entry name" value="G_PROTEIN_RECEP_F2_4"/>
    <property type="match status" value="1"/>
</dbReference>
<proteinExistence type="evidence at protein level"/>
<keyword id="KW-0002">3D-structure</keyword>
<keyword id="KW-0877">Alternative promoter usage</keyword>
<keyword id="KW-0025">Alternative splicing</keyword>
<keyword id="KW-1003">Cell membrane</keyword>
<keyword id="KW-0903">Direct protein sequencing</keyword>
<keyword id="KW-1015">Disulfide bond</keyword>
<keyword id="KW-0297">G-protein coupled receptor</keyword>
<keyword id="KW-0325">Glycoprotein</keyword>
<keyword id="KW-0472">Membrane</keyword>
<keyword id="KW-1267">Proteomics identification</keyword>
<keyword id="KW-0675">Receptor</keyword>
<keyword id="KW-1185">Reference proteome</keyword>
<keyword id="KW-0732">Signal</keyword>
<keyword id="KW-0807">Transducer</keyword>
<keyword id="KW-0812">Transmembrane</keyword>
<keyword id="KW-1133">Transmembrane helix</keyword>
<accession>P30988</accession>
<accession>A0A0C4DG16</accession>
<accession>A4D1G6</accession>
<accession>F5H605</accession>
<accession>O14585</accession>
<accession>Q13941</accession>
<accession>Q5ZGL8</accession>
<accession>Q659U6</accession>
<accession>Q6DJU8</accession>
<accession>Q6T712</accession>
<feature type="signal peptide" evidence="6">
    <location>
        <begin position="1"/>
        <end position="24"/>
    </location>
</feature>
<feature type="chain" id="PRO_0000447620" description="Calcitonin receptor">
    <location>
        <begin position="25"/>
        <end position="474"/>
    </location>
</feature>
<feature type="topological domain" description="Extracellular" evidence="19">
    <location>
        <begin position="25"/>
        <end position="146"/>
    </location>
</feature>
<feature type="transmembrane region" description="Helical; Name=1" evidence="9 30">
    <location>
        <begin position="147"/>
        <end position="169"/>
    </location>
</feature>
<feature type="topological domain" description="Cytoplasmic" evidence="19">
    <location>
        <begin position="170"/>
        <end position="181"/>
    </location>
</feature>
<feature type="transmembrane region" description="Helical; Name=2" evidence="9 30">
    <location>
        <begin position="182"/>
        <end position="202"/>
    </location>
</feature>
<feature type="topological domain" description="Extracellular" evidence="19">
    <location>
        <begin position="203"/>
        <end position="219"/>
    </location>
</feature>
<feature type="transmembrane region" description="Helical; Name=3" evidence="9 30">
    <location>
        <begin position="220"/>
        <end position="242"/>
    </location>
</feature>
<feature type="topological domain" description="Cytoplasmic" evidence="19">
    <location>
        <begin position="243"/>
        <end position="259"/>
    </location>
</feature>
<feature type="transmembrane region" description="Helical; Name=4" evidence="9 30">
    <location>
        <begin position="260"/>
        <end position="280"/>
    </location>
</feature>
<feature type="topological domain" description="Extracellular" evidence="19">
    <location>
        <begin position="281"/>
        <end position="296"/>
    </location>
</feature>
<feature type="transmembrane region" description="Helical; Name=5" evidence="9 30">
    <location>
        <begin position="297"/>
        <end position="320"/>
    </location>
</feature>
<feature type="topological domain" description="Cytoplasmic" evidence="19">
    <location>
        <begin position="321"/>
        <end position="340"/>
    </location>
</feature>
<feature type="transmembrane region" description="Helical; Name=6" evidence="9 30">
    <location>
        <begin position="341"/>
        <end position="359"/>
    </location>
</feature>
<feature type="topological domain" description="Extracellular" evidence="19">
    <location>
        <begin position="360"/>
        <end position="367"/>
    </location>
</feature>
<feature type="transmembrane region" description="Helical; Name=7" evidence="9 30">
    <location>
        <begin position="368"/>
        <end position="394"/>
    </location>
</feature>
<feature type="topological domain" description="Cytoplasmic" evidence="19">
    <location>
        <begin position="395"/>
        <end position="474"/>
    </location>
</feature>
<feature type="glycosylation site" description="N-linked (GlcNAc...) asparagine" evidence="1">
    <location>
        <position position="28"/>
    </location>
</feature>
<feature type="glycosylation site" description="N-linked (GlcNAc...) asparagine" evidence="8 22">
    <location>
        <position position="73"/>
    </location>
</feature>
<feature type="glycosylation site" description="N-linked (GlcNAc...) asparagine" evidence="8 22">
    <location>
        <position position="125"/>
    </location>
</feature>
<feature type="glycosylation site" description="N-linked (GlcNAc...) asparagine" evidence="8 22">
    <location>
        <position position="130"/>
    </location>
</feature>
<feature type="disulfide bond" evidence="8 9 10 22 30 33">
    <location>
        <begin position="55"/>
        <end position="81"/>
    </location>
</feature>
<feature type="disulfide bond" evidence="8 9 10 22 30 33">
    <location>
        <begin position="72"/>
        <end position="112"/>
    </location>
</feature>
<feature type="disulfide bond" evidence="8 9 10 22 30 33">
    <location>
        <begin position="95"/>
        <end position="134"/>
    </location>
</feature>
<feature type="disulfide bond" evidence="8 9 10 22 30 33">
    <location>
        <begin position="219"/>
        <end position="289"/>
    </location>
</feature>
<feature type="splice variant" id="VSP_060209" description="In isoform 3 and isoform 4.">
    <location>
        <begin position="1"/>
        <end position="47"/>
    </location>
</feature>
<feature type="splice variant" id="VSP_060211" description="In isoform 2, isoform 4 and isoform 6.">
    <original>R</original>
    <variation>RKLTTIFPLNWKYRKAL</variation>
    <location>
        <position position="174"/>
    </location>
</feature>
<feature type="splice variant" id="VSP_060212" description="In isoform 5 and isoform 6.">
    <original>GFPLVPT</original>
    <variation>APAFHRD</variation>
    <location>
        <begin position="268"/>
        <end position="274"/>
    </location>
</feature>
<feature type="splice variant" id="VSP_060213" description="In isoform 5 and isoform 6.">
    <location>
        <begin position="275"/>
        <end position="474"/>
    </location>
</feature>
<feature type="sequence variant" id="VAR_003580" description="Probable protective factor against osteoporosis; dbSNP:rs1801197." evidence="2 3 4 7 12 13 14 15 16 17 18">
    <original>L</original>
    <variation>P</variation>
    <location>
        <position position="447"/>
    </location>
</feature>
<feature type="sequence conflict" description="In Ref. 3; AAC50301." evidence="19" ref="3">
    <original>I</original>
    <variation>T</variation>
    <location>
        <position position="347"/>
    </location>
</feature>
<feature type="helix" evidence="34">
    <location>
        <begin position="38"/>
        <end position="40"/>
    </location>
</feature>
<feature type="helix" evidence="34">
    <location>
        <begin position="46"/>
        <end position="61"/>
    </location>
</feature>
<feature type="strand" evidence="34">
    <location>
        <begin position="67"/>
        <end position="69"/>
    </location>
</feature>
<feature type="strand" evidence="36">
    <location>
        <begin position="75"/>
        <end position="77"/>
    </location>
</feature>
<feature type="strand" evidence="39">
    <location>
        <begin position="78"/>
        <end position="82"/>
    </location>
</feature>
<feature type="strand" evidence="35">
    <location>
        <begin position="85"/>
        <end position="87"/>
    </location>
</feature>
<feature type="strand" evidence="34">
    <location>
        <begin position="90"/>
        <end position="94"/>
    </location>
</feature>
<feature type="strand" evidence="34">
    <location>
        <begin position="97"/>
        <end position="99"/>
    </location>
</feature>
<feature type="strand" evidence="34">
    <location>
        <begin position="106"/>
        <end position="112"/>
    </location>
</feature>
<feature type="strand" evidence="39">
    <location>
        <begin position="114"/>
        <end position="116"/>
    </location>
</feature>
<feature type="turn" evidence="34">
    <location>
        <begin position="122"/>
        <end position="124"/>
    </location>
</feature>
<feature type="strand" evidence="37">
    <location>
        <begin position="125"/>
        <end position="127"/>
    </location>
</feature>
<feature type="helix" evidence="34">
    <location>
        <begin position="132"/>
        <end position="134"/>
    </location>
</feature>
<feature type="strand" evidence="39">
    <location>
        <begin position="135"/>
        <end position="137"/>
    </location>
</feature>
<feature type="helix" evidence="39">
    <location>
        <begin position="138"/>
        <end position="172"/>
    </location>
</feature>
<feature type="helix" evidence="39">
    <location>
        <begin position="174"/>
        <end position="176"/>
    </location>
</feature>
<feature type="helix" evidence="39">
    <location>
        <begin position="179"/>
        <end position="204"/>
    </location>
</feature>
<feature type="turn" evidence="39">
    <location>
        <begin position="205"/>
        <end position="207"/>
    </location>
</feature>
<feature type="helix" evidence="39">
    <location>
        <begin position="209"/>
        <end position="214"/>
    </location>
</feature>
<feature type="helix" evidence="39">
    <location>
        <begin position="217"/>
        <end position="248"/>
    </location>
</feature>
<feature type="turn" evidence="39">
    <location>
        <begin position="249"/>
        <end position="254"/>
    </location>
</feature>
<feature type="helix" evidence="39">
    <location>
        <begin position="260"/>
        <end position="267"/>
    </location>
</feature>
<feature type="turn" evidence="39">
    <location>
        <begin position="268"/>
        <end position="270"/>
    </location>
</feature>
<feature type="helix" evidence="39">
    <location>
        <begin position="271"/>
        <end position="283"/>
    </location>
</feature>
<feature type="helix" evidence="39">
    <location>
        <begin position="288"/>
        <end position="290"/>
    </location>
</feature>
<feature type="strand" evidence="40">
    <location>
        <begin position="293"/>
        <end position="295"/>
    </location>
</feature>
<feature type="helix" evidence="39">
    <location>
        <begin position="296"/>
        <end position="298"/>
    </location>
</feature>
<feature type="helix" evidence="39">
    <location>
        <begin position="299"/>
        <end position="329"/>
    </location>
</feature>
<feature type="helix" evidence="39">
    <location>
        <begin position="334"/>
        <end position="352"/>
    </location>
</feature>
<feature type="helix" evidence="39">
    <location>
        <begin position="355"/>
        <end position="358"/>
    </location>
</feature>
<feature type="helix" evidence="39">
    <location>
        <begin position="366"/>
        <end position="381"/>
    </location>
</feature>
<feature type="helix" evidence="39">
    <location>
        <begin position="383"/>
        <end position="391"/>
    </location>
</feature>
<feature type="turn" evidence="38">
    <location>
        <begin position="392"/>
        <end position="394"/>
    </location>
</feature>
<feature type="helix" evidence="39">
    <location>
        <begin position="396"/>
        <end position="405"/>
    </location>
</feature>
<feature type="turn" evidence="39">
    <location>
        <begin position="406"/>
        <end position="408"/>
    </location>
</feature>
<sequence>MRFTFTSRCLALFLLLNHPTPILPAFSNQTYPTIEPKPFLYVVGRKKMMDAQYKCYDRMQQLPAYQGEGPYCNRTWDGWLCWDDTPAGVLSYQFCPDYFPDFDPSEKVTKYCDEKGVWFKHPENNRTWSNYTMCNAFTPEKLKNAYVLYYLAIVGHSLSIFTLVISLGIFVFFRSLGCQRVTLHKNMFLTYILNSMIIIIHLVEVVPNGELVRRDPVSCKILHFFHQYMMACNYFWMLCEGIYLHTLIVVAVFTEKQRLRWYYLLGWGFPLVPTTIHAITRAVYFNDNCWLSVETHLLYIIHGPVMAALVVNFFFLLNIVRVLVTKMRETHEAESHMYLKAVKATMILVPLLGIQFVVFPWRPSNKMLGKIYDYVMHSLIHFQGFFVATIYCFCNNEVQTTVKRQWAQFKIQWNQRWGRRPSNRSARAAAAAAEAGDIPIYICHQELRNEPANNQGEESAEIIPLNIIEQESSA</sequence>
<evidence type="ECO:0000255" key="1"/>
<evidence type="ECO:0000269" key="2">
    <source>
    </source>
</evidence>
<evidence type="ECO:0000269" key="3">
    <source>
    </source>
</evidence>
<evidence type="ECO:0000269" key="4">
    <source>
    </source>
</evidence>
<evidence type="ECO:0000269" key="5">
    <source>
    </source>
</evidence>
<evidence type="ECO:0000269" key="6">
    <source>
    </source>
</evidence>
<evidence type="ECO:0000269" key="7">
    <source>
    </source>
</evidence>
<evidence type="ECO:0000269" key="8">
    <source>
    </source>
</evidence>
<evidence type="ECO:0000269" key="9">
    <source>
    </source>
</evidence>
<evidence type="ECO:0000269" key="10">
    <source>
    </source>
</evidence>
<evidence type="ECO:0000269" key="11">
    <source>
    </source>
</evidence>
<evidence type="ECO:0000269" key="12">
    <source>
    </source>
</evidence>
<evidence type="ECO:0000269" key="13">
    <source>
    </source>
</evidence>
<evidence type="ECO:0000269" key="14">
    <source>
    </source>
</evidence>
<evidence type="ECO:0000269" key="15">
    <source>
    </source>
</evidence>
<evidence type="ECO:0000269" key="16">
    <source ref="12"/>
</evidence>
<evidence type="ECO:0000269" key="17">
    <source ref="7"/>
</evidence>
<evidence type="ECO:0000269" key="18">
    <source ref="8"/>
</evidence>
<evidence type="ECO:0000305" key="19"/>
<evidence type="ECO:0000312" key="20">
    <source>
        <dbReference type="HGNC" id="HGNC:1440"/>
    </source>
</evidence>
<evidence type="ECO:0007744" key="21">
    <source>
        <dbReference type="PDB" id="6PFO"/>
    </source>
</evidence>
<evidence type="ECO:0007744" key="22">
    <source>
        <dbReference type="PDB" id="6PGQ"/>
    </source>
</evidence>
<evidence type="ECO:0007744" key="23">
    <source>
        <dbReference type="PDB" id="7TYF"/>
    </source>
</evidence>
<evidence type="ECO:0007744" key="24">
    <source>
        <dbReference type="PDB" id="7TYH"/>
    </source>
</evidence>
<evidence type="ECO:0007744" key="25">
    <source>
        <dbReference type="PDB" id="7TYI"/>
    </source>
</evidence>
<evidence type="ECO:0007744" key="26">
    <source>
        <dbReference type="PDB" id="7TYL"/>
    </source>
</evidence>
<evidence type="ECO:0007744" key="27">
    <source>
        <dbReference type="PDB" id="7TYN"/>
    </source>
</evidence>
<evidence type="ECO:0007744" key="28">
    <source>
        <dbReference type="PDB" id="7TYO"/>
    </source>
</evidence>
<evidence type="ECO:0007744" key="29">
    <source>
        <dbReference type="PDB" id="7TYW"/>
    </source>
</evidence>
<evidence type="ECO:0007744" key="30">
    <source>
        <dbReference type="PDB" id="7TYX"/>
    </source>
</evidence>
<evidence type="ECO:0007744" key="31">
    <source>
        <dbReference type="PDB" id="7TYY"/>
    </source>
</evidence>
<evidence type="ECO:0007744" key="32">
    <source>
        <dbReference type="PDB" id="7TZF"/>
    </source>
</evidence>
<evidence type="ECO:0007744" key="33">
    <source>
        <dbReference type="PDB" id="9AUC"/>
    </source>
</evidence>
<evidence type="ECO:0007829" key="34">
    <source>
        <dbReference type="PDB" id="6PFO"/>
    </source>
</evidence>
<evidence type="ECO:0007829" key="35">
    <source>
        <dbReference type="PDB" id="7TYI"/>
    </source>
</evidence>
<evidence type="ECO:0007829" key="36">
    <source>
        <dbReference type="PDB" id="7TYO"/>
    </source>
</evidence>
<evidence type="ECO:0007829" key="37">
    <source>
        <dbReference type="PDB" id="7TYW"/>
    </source>
</evidence>
<evidence type="ECO:0007829" key="38">
    <source>
        <dbReference type="PDB" id="8F0J"/>
    </source>
</evidence>
<evidence type="ECO:0007829" key="39">
    <source>
        <dbReference type="PDB" id="8F0K"/>
    </source>
</evidence>
<evidence type="ECO:0007829" key="40">
    <source>
        <dbReference type="PDB" id="9AUC"/>
    </source>
</evidence>
<organism>
    <name type="scientific">Homo sapiens</name>
    <name type="common">Human</name>
    <dbReference type="NCBI Taxonomy" id="9606"/>
    <lineage>
        <taxon>Eukaryota</taxon>
        <taxon>Metazoa</taxon>
        <taxon>Chordata</taxon>
        <taxon>Craniata</taxon>
        <taxon>Vertebrata</taxon>
        <taxon>Euteleostomi</taxon>
        <taxon>Mammalia</taxon>
        <taxon>Eutheria</taxon>
        <taxon>Euarchontoglires</taxon>
        <taxon>Primates</taxon>
        <taxon>Haplorrhini</taxon>
        <taxon>Catarrhini</taxon>
        <taxon>Hominidae</taxon>
        <taxon>Homo</taxon>
    </lineage>
</organism>